<evidence type="ECO:0000250" key="1"/>
<evidence type="ECO:0000250" key="2">
    <source>
        <dbReference type="UniProtKB" id="Q14318"/>
    </source>
</evidence>
<evidence type="ECO:0000255" key="3"/>
<evidence type="ECO:0000255" key="4">
    <source>
        <dbReference type="PROSITE-ProRule" id="PRU00277"/>
    </source>
</evidence>
<evidence type="ECO:0000256" key="5">
    <source>
        <dbReference type="SAM" id="MobiDB-lite"/>
    </source>
</evidence>
<evidence type="ECO:0000305" key="6"/>
<gene>
    <name type="primary">Fkbp8</name>
</gene>
<comment type="function">
    <text evidence="1">Constitutively inactive PPiase, which becomes active when bound to calmodulin and calcium. Seems to act as a chaperone for BCL2, targets it to the mitochondria and modulates its phosphorylation state. The BCL2/FKBP8/calmodulin/calcium complex probably interferes with the binding of BCL2 to its targets. The active form of FKBP8 may therefore play a role in the regulation of apoptosis (By similarity).</text>
</comment>
<comment type="catalytic activity">
    <reaction>
        <text>[protein]-peptidylproline (omega=180) = [protein]-peptidylproline (omega=0)</text>
        <dbReference type="Rhea" id="RHEA:16237"/>
        <dbReference type="Rhea" id="RHEA-COMP:10747"/>
        <dbReference type="Rhea" id="RHEA-COMP:10748"/>
        <dbReference type="ChEBI" id="CHEBI:83833"/>
        <dbReference type="ChEBI" id="CHEBI:83834"/>
        <dbReference type="EC" id="5.2.1.8"/>
    </reaction>
</comment>
<comment type="cofactor">
    <cofactor evidence="1">
        <name>Ca(2+)</name>
        <dbReference type="ChEBI" id="CHEBI:29108"/>
    </cofactor>
</comment>
<comment type="subunit">
    <text evidence="1 6">Homomultimers or heteromultimers (Potential). Forms heterodimer with calmodulin. When activated by calmodulin and calcium, interacts with the BH4 domain of BCL2 and weakly with BCLX isoform Bcl-X(L). Does not bind and inhibit calcineurin. Interacts with ZFYVE27; may negatively regulate ZFYVE27 phosphorylation (By similarity).</text>
</comment>
<comment type="subcellular location">
    <subcellularLocation>
        <location evidence="1">Mitochondrion membrane</location>
        <topology evidence="1">Single-pass membrane protein</topology>
        <orientation evidence="1">Cytoplasmic side</orientation>
    </subcellularLocation>
</comment>
<comment type="PTM">
    <text evidence="2">Ubiquitinated by PRKN during mitophagy, leading to its degradation and enhancement of mitophagy. Deubiquitinated by USP30.</text>
</comment>
<comment type="miscellaneous">
    <text evidence="1">Binds the immunosuppressant FK506 only in its calmodulin/calcium activated form.</text>
</comment>
<protein>
    <recommendedName>
        <fullName>Peptidyl-prolyl cis-trans isomerase FKBP8</fullName>
        <shortName>PPIase FKBP8</shortName>
        <ecNumber>5.2.1.8</ecNumber>
    </recommendedName>
    <alternativeName>
        <fullName>FK506-binding protein 8</fullName>
        <shortName>FKBP-8</shortName>
    </alternativeName>
    <alternativeName>
        <fullName>Rotamase</fullName>
    </alternativeName>
</protein>
<feature type="chain" id="PRO_0000342530" description="Peptidyl-prolyl cis-trans isomerase FKBP8">
    <location>
        <begin position="1"/>
        <end position="403"/>
    </location>
</feature>
<feature type="transmembrane region" description="Helical" evidence="3">
    <location>
        <begin position="381"/>
        <end position="401"/>
    </location>
</feature>
<feature type="domain" description="PPIase FKBP-type" evidence="4">
    <location>
        <begin position="110"/>
        <end position="195"/>
    </location>
</feature>
<feature type="repeat" description="TPR 1">
    <location>
        <begin position="212"/>
        <end position="245"/>
    </location>
</feature>
<feature type="repeat" description="TPR 2">
    <location>
        <begin position="263"/>
        <end position="296"/>
    </location>
</feature>
<feature type="repeat" description="TPR 3">
    <location>
        <begin position="297"/>
        <end position="330"/>
    </location>
</feature>
<feature type="region of interest" description="Disordered" evidence="5">
    <location>
        <begin position="26"/>
        <end position="54"/>
    </location>
</feature>
<feature type="compositionally biased region" description="Acidic residues" evidence="5">
    <location>
        <begin position="28"/>
        <end position="39"/>
    </location>
</feature>
<feature type="modified residue" description="Phosphoserine" evidence="2">
    <location>
        <position position="287"/>
    </location>
</feature>
<feature type="cross-link" description="Glycyl lysine isopeptide (Lys-Gly) (interchain with G-Cter in ubiquitin)" evidence="2">
    <location>
        <position position="240"/>
    </location>
</feature>
<feature type="cross-link" description="Glycyl lysine isopeptide (Lys-Gly) (interchain with G-Cter in ubiquitin)" evidence="2">
    <location>
        <position position="262"/>
    </location>
</feature>
<feature type="cross-link" description="Glycyl lysine isopeptide (Lys-Gly) (interchain with G-Cter in ubiquitin)" evidence="2">
    <location>
        <position position="264"/>
    </location>
</feature>
<feature type="cross-link" description="Glycyl lysine isopeptide (Lys-Gly) (interchain with G-Cter in ubiquitin)" evidence="2">
    <location>
        <position position="275"/>
    </location>
</feature>
<feature type="cross-link" description="Glycyl lysine isopeptide (Lys-Gly) (interchain with G-Cter in ubiquitin)" evidence="2">
    <location>
        <position position="298"/>
    </location>
</feature>
<feature type="cross-link" description="Glycyl lysine isopeptide (Lys-Gly) (interchain with G-Cter in ubiquitin)" evidence="2">
    <location>
        <position position="305"/>
    </location>
</feature>
<feature type="cross-link" description="Glycyl lysine isopeptide (Lys-Gly) (interchain with G-Cter in ubiquitin)" evidence="2">
    <location>
        <position position="325"/>
    </location>
</feature>
<feature type="cross-link" description="Glycyl lysine isopeptide (Lys-Gly) (interchain with G-Cter in ubiquitin)" evidence="2">
    <location>
        <position position="331"/>
    </location>
</feature>
<feature type="cross-link" description="Glycyl lysine isopeptide (Lys-Gly) (interchain with G-Cter in ubiquitin)" evidence="2">
    <location>
        <position position="339"/>
    </location>
</feature>
<feature type="cross-link" description="Glycyl lysine isopeptide (Lys-Gly) (interchain with G-Cter in ubiquitin)" evidence="2">
    <location>
        <position position="342"/>
    </location>
</feature>
<feature type="cross-link" description="Glycyl lysine isopeptide (Lys-Gly) (interchain with G-Cter in ubiquitin)" evidence="2">
    <location>
        <position position="343"/>
    </location>
</feature>
<keyword id="KW-0053">Apoptosis</keyword>
<keyword id="KW-0106">Calcium</keyword>
<keyword id="KW-0413">Isomerase</keyword>
<keyword id="KW-1017">Isopeptide bond</keyword>
<keyword id="KW-0472">Membrane</keyword>
<keyword id="KW-0496">Mitochondrion</keyword>
<keyword id="KW-0597">Phosphoprotein</keyword>
<keyword id="KW-1185">Reference proteome</keyword>
<keyword id="KW-0677">Repeat</keyword>
<keyword id="KW-0697">Rotamase</keyword>
<keyword id="KW-0802">TPR repeat</keyword>
<keyword id="KW-0812">Transmembrane</keyword>
<keyword id="KW-1133">Transmembrane helix</keyword>
<keyword id="KW-0832">Ubl conjugation</keyword>
<dbReference type="EC" id="5.2.1.8"/>
<dbReference type="EMBL" id="BC107454">
    <property type="protein sequence ID" value="AAI07455.1"/>
    <property type="molecule type" value="mRNA"/>
</dbReference>
<dbReference type="RefSeq" id="NP_001032257.1">
    <property type="nucleotide sequence ID" value="NM_001037180.1"/>
</dbReference>
<dbReference type="RefSeq" id="XP_038950254.1">
    <property type="nucleotide sequence ID" value="XM_039094326.1"/>
</dbReference>
<dbReference type="RefSeq" id="XP_063131250.1">
    <property type="nucleotide sequence ID" value="XM_063275180.1"/>
</dbReference>
<dbReference type="RefSeq" id="XP_063131251.1">
    <property type="nucleotide sequence ID" value="XM_063275181.1"/>
</dbReference>
<dbReference type="RefSeq" id="XP_063131252.1">
    <property type="nucleotide sequence ID" value="XM_063275182.1"/>
</dbReference>
<dbReference type="SMR" id="Q3B7U9"/>
<dbReference type="BioGRID" id="253272">
    <property type="interactions" value="1"/>
</dbReference>
<dbReference type="FunCoup" id="Q3B7U9">
    <property type="interactions" value="1627"/>
</dbReference>
<dbReference type="STRING" id="10116.ENSRNOP00000074539"/>
<dbReference type="GlyGen" id="Q3B7U9">
    <property type="glycosylation" value="1 site"/>
</dbReference>
<dbReference type="iPTMnet" id="Q3B7U9"/>
<dbReference type="PhosphoSitePlus" id="Q3B7U9"/>
<dbReference type="jPOST" id="Q3B7U9"/>
<dbReference type="PaxDb" id="10116-ENSRNOP00000027040"/>
<dbReference type="Ensembl" id="ENSRNOT00000077756.2">
    <property type="protein sequence ID" value="ENSRNOP00000074539.1"/>
    <property type="gene ID" value="ENSRNOG00000058359.2"/>
</dbReference>
<dbReference type="GeneID" id="290652"/>
<dbReference type="KEGG" id="rno:290652"/>
<dbReference type="UCSC" id="RGD:1308670">
    <property type="organism name" value="rat"/>
</dbReference>
<dbReference type="AGR" id="RGD:1308670"/>
<dbReference type="CTD" id="23770"/>
<dbReference type="RGD" id="1308670">
    <property type="gene designation" value="Fkbp8"/>
</dbReference>
<dbReference type="eggNOG" id="KOG0543">
    <property type="taxonomic scope" value="Eukaryota"/>
</dbReference>
<dbReference type="GeneTree" id="ENSGT00940000156705"/>
<dbReference type="HOGENOM" id="CLU_013615_1_3_1"/>
<dbReference type="InParanoid" id="Q3B7U9"/>
<dbReference type="OMA" id="IDAWEMV"/>
<dbReference type="OrthoDB" id="532682at2759"/>
<dbReference type="PhylomeDB" id="Q3B7U9"/>
<dbReference type="TreeFam" id="TF105295"/>
<dbReference type="Reactome" id="R-RNO-5689880">
    <property type="pathway name" value="Ub-specific processing proteases"/>
</dbReference>
<dbReference type="PRO" id="PR:Q3B7U9"/>
<dbReference type="Proteomes" id="UP000002494">
    <property type="component" value="Chromosome 16"/>
</dbReference>
<dbReference type="Bgee" id="ENSRNOG00000058359">
    <property type="expression patterns" value="Expressed in frontal cortex and 19 other cell types or tissues"/>
</dbReference>
<dbReference type="GO" id="GO:0005829">
    <property type="term" value="C:cytosol"/>
    <property type="evidence" value="ECO:0000318"/>
    <property type="project" value="GO_Central"/>
</dbReference>
<dbReference type="GO" id="GO:0012505">
    <property type="term" value="C:endomembrane system"/>
    <property type="evidence" value="ECO:0000318"/>
    <property type="project" value="GO_Central"/>
</dbReference>
<dbReference type="GO" id="GO:0005789">
    <property type="term" value="C:endoplasmic reticulum membrane"/>
    <property type="evidence" value="ECO:0000266"/>
    <property type="project" value="RGD"/>
</dbReference>
<dbReference type="GO" id="GO:0016020">
    <property type="term" value="C:membrane"/>
    <property type="evidence" value="ECO:0000318"/>
    <property type="project" value="GO_Central"/>
</dbReference>
<dbReference type="GO" id="GO:0005740">
    <property type="term" value="C:mitochondrial envelope"/>
    <property type="evidence" value="ECO:0000266"/>
    <property type="project" value="RGD"/>
</dbReference>
<dbReference type="GO" id="GO:0031966">
    <property type="term" value="C:mitochondrial membrane"/>
    <property type="evidence" value="ECO:0007669"/>
    <property type="project" value="UniProtKB-SubCell"/>
</dbReference>
<dbReference type="GO" id="GO:0032991">
    <property type="term" value="C:protein-containing complex"/>
    <property type="evidence" value="ECO:0000266"/>
    <property type="project" value="RGD"/>
</dbReference>
<dbReference type="GO" id="GO:0005516">
    <property type="term" value="F:calmodulin binding"/>
    <property type="evidence" value="ECO:0000266"/>
    <property type="project" value="RGD"/>
</dbReference>
<dbReference type="GO" id="GO:0097718">
    <property type="term" value="F:disordered domain specific binding"/>
    <property type="evidence" value="ECO:0000266"/>
    <property type="project" value="RGD"/>
</dbReference>
<dbReference type="GO" id="GO:0042802">
    <property type="term" value="F:identical protein binding"/>
    <property type="evidence" value="ECO:0000266"/>
    <property type="project" value="RGD"/>
</dbReference>
<dbReference type="GO" id="GO:0003755">
    <property type="term" value="F:peptidyl-prolyl cis-trans isomerase activity"/>
    <property type="evidence" value="ECO:0007669"/>
    <property type="project" value="UniProtKB-KW"/>
</dbReference>
<dbReference type="GO" id="GO:0044183">
    <property type="term" value="F:protein folding chaperone"/>
    <property type="evidence" value="ECO:0000266"/>
    <property type="project" value="RGD"/>
</dbReference>
<dbReference type="GO" id="GO:0006915">
    <property type="term" value="P:apoptotic process"/>
    <property type="evidence" value="ECO:0000266"/>
    <property type="project" value="RGD"/>
</dbReference>
<dbReference type="GO" id="GO:0030509">
    <property type="term" value="P:BMP signaling pathway"/>
    <property type="evidence" value="ECO:0000266"/>
    <property type="project" value="RGD"/>
</dbReference>
<dbReference type="GO" id="GO:0043010">
    <property type="term" value="P:camera-type eye development"/>
    <property type="evidence" value="ECO:0000266"/>
    <property type="project" value="RGD"/>
</dbReference>
<dbReference type="GO" id="GO:0001708">
    <property type="term" value="P:cell fate specification"/>
    <property type="evidence" value="ECO:0000266"/>
    <property type="project" value="RGD"/>
</dbReference>
<dbReference type="GO" id="GO:0021904">
    <property type="term" value="P:dorsal/ventral neural tube patterning"/>
    <property type="evidence" value="ECO:0000266"/>
    <property type="project" value="RGD"/>
</dbReference>
<dbReference type="GO" id="GO:0009953">
    <property type="term" value="P:dorsal/ventral pattern formation"/>
    <property type="evidence" value="ECO:0000266"/>
    <property type="project" value="RGD"/>
</dbReference>
<dbReference type="GO" id="GO:0035264">
    <property type="term" value="P:multicellular organism growth"/>
    <property type="evidence" value="ECO:0000266"/>
    <property type="project" value="RGD"/>
</dbReference>
<dbReference type="GO" id="GO:0043066">
    <property type="term" value="P:negative regulation of apoptotic process"/>
    <property type="evidence" value="ECO:0000266"/>
    <property type="project" value="RGD"/>
</dbReference>
<dbReference type="GO" id="GO:0021915">
    <property type="term" value="P:neural tube development"/>
    <property type="evidence" value="ECO:0000266"/>
    <property type="project" value="RGD"/>
</dbReference>
<dbReference type="GO" id="GO:0048665">
    <property type="term" value="P:neuron fate specification"/>
    <property type="evidence" value="ECO:0000266"/>
    <property type="project" value="RGD"/>
</dbReference>
<dbReference type="GO" id="GO:0030513">
    <property type="term" value="P:positive regulation of BMP signaling pathway"/>
    <property type="evidence" value="ECO:0000266"/>
    <property type="project" value="RGD"/>
</dbReference>
<dbReference type="GO" id="GO:0006457">
    <property type="term" value="P:protein folding"/>
    <property type="evidence" value="ECO:0000266"/>
    <property type="project" value="RGD"/>
</dbReference>
<dbReference type="GO" id="GO:0070585">
    <property type="term" value="P:protein localization to mitochondrion"/>
    <property type="evidence" value="ECO:0000266"/>
    <property type="project" value="RGD"/>
</dbReference>
<dbReference type="GO" id="GO:0030510">
    <property type="term" value="P:regulation of BMP signaling pathway"/>
    <property type="evidence" value="ECO:0000266"/>
    <property type="project" value="RGD"/>
</dbReference>
<dbReference type="GO" id="GO:0010468">
    <property type="term" value="P:regulation of gene expression"/>
    <property type="evidence" value="ECO:0000266"/>
    <property type="project" value="RGD"/>
</dbReference>
<dbReference type="GO" id="GO:1901524">
    <property type="term" value="P:regulation of mitophagy"/>
    <property type="evidence" value="ECO:0000266"/>
    <property type="project" value="RGD"/>
</dbReference>
<dbReference type="GO" id="GO:0007224">
    <property type="term" value="P:smoothened signaling pathway"/>
    <property type="evidence" value="ECO:0000266"/>
    <property type="project" value="RGD"/>
</dbReference>
<dbReference type="FunFam" id="1.25.40.10:FF:000113">
    <property type="entry name" value="Peptidylprolyl isomerase"/>
    <property type="match status" value="1"/>
</dbReference>
<dbReference type="FunFam" id="3.10.50.40:FF:000027">
    <property type="entry name" value="Peptidylprolyl isomerase"/>
    <property type="match status" value="1"/>
</dbReference>
<dbReference type="Gene3D" id="3.10.50.40">
    <property type="match status" value="1"/>
</dbReference>
<dbReference type="Gene3D" id="1.25.40.10">
    <property type="entry name" value="Tetratricopeptide repeat domain"/>
    <property type="match status" value="1"/>
</dbReference>
<dbReference type="InterPro" id="IPR050754">
    <property type="entry name" value="FKBP4/5/8-like"/>
</dbReference>
<dbReference type="InterPro" id="IPR046357">
    <property type="entry name" value="PPIase_dom_sf"/>
</dbReference>
<dbReference type="InterPro" id="IPR001179">
    <property type="entry name" value="PPIase_FKBP_dom"/>
</dbReference>
<dbReference type="InterPro" id="IPR011990">
    <property type="entry name" value="TPR-like_helical_dom_sf"/>
</dbReference>
<dbReference type="InterPro" id="IPR019734">
    <property type="entry name" value="TPR_rpt"/>
</dbReference>
<dbReference type="PANTHER" id="PTHR46512:SF3">
    <property type="entry name" value="PEPTIDYL-PROLYL CIS-TRANS ISOMERASE FKBP8"/>
    <property type="match status" value="1"/>
</dbReference>
<dbReference type="PANTHER" id="PTHR46512">
    <property type="entry name" value="PEPTIDYLPROLYL ISOMERASE"/>
    <property type="match status" value="1"/>
</dbReference>
<dbReference type="Pfam" id="PF00254">
    <property type="entry name" value="FKBP_C"/>
    <property type="match status" value="1"/>
</dbReference>
<dbReference type="Pfam" id="PF13432">
    <property type="entry name" value="TPR_16"/>
    <property type="match status" value="1"/>
</dbReference>
<dbReference type="SMART" id="SM00028">
    <property type="entry name" value="TPR"/>
    <property type="match status" value="3"/>
</dbReference>
<dbReference type="SUPFAM" id="SSF54534">
    <property type="entry name" value="FKBP-like"/>
    <property type="match status" value="1"/>
</dbReference>
<dbReference type="SUPFAM" id="SSF48452">
    <property type="entry name" value="TPR-like"/>
    <property type="match status" value="1"/>
</dbReference>
<dbReference type="PROSITE" id="PS50059">
    <property type="entry name" value="FKBP_PPIASE"/>
    <property type="match status" value="1"/>
</dbReference>
<dbReference type="PROSITE" id="PS50005">
    <property type="entry name" value="TPR"/>
    <property type="match status" value="2"/>
</dbReference>
<dbReference type="PROSITE" id="PS50293">
    <property type="entry name" value="TPR_REGION"/>
    <property type="match status" value="1"/>
</dbReference>
<name>FKBP8_RAT</name>
<accession>Q3B7U9</accession>
<reference key="1">
    <citation type="journal article" date="2004" name="Genome Res.">
        <title>The status, quality, and expansion of the NIH full-length cDNA project: the Mammalian Gene Collection (MGC).</title>
        <authorList>
            <consortium name="The MGC Project Team"/>
        </authorList>
    </citation>
    <scope>NUCLEOTIDE SEQUENCE [LARGE SCALE MRNA]</scope>
    <source>
        <tissue>Spleen</tissue>
    </source>
</reference>
<proteinExistence type="evidence at transcript level"/>
<organism>
    <name type="scientific">Rattus norvegicus</name>
    <name type="common">Rat</name>
    <dbReference type="NCBI Taxonomy" id="10116"/>
    <lineage>
        <taxon>Eukaryota</taxon>
        <taxon>Metazoa</taxon>
        <taxon>Chordata</taxon>
        <taxon>Craniata</taxon>
        <taxon>Vertebrata</taxon>
        <taxon>Euteleostomi</taxon>
        <taxon>Mammalia</taxon>
        <taxon>Eutheria</taxon>
        <taxon>Euarchontoglires</taxon>
        <taxon>Glires</taxon>
        <taxon>Rodentia</taxon>
        <taxon>Myomorpha</taxon>
        <taxon>Muroidea</taxon>
        <taxon>Muridae</taxon>
        <taxon>Murinae</taxon>
        <taxon>Rattus</taxon>
    </lineage>
</organism>
<sequence>MASWAEPSEPAAQLLCGAPLLEGFEVLDGVDDAEEEDDLSGLPPLEDMGQPTVEEAEQPGALAREFLAATEPEPAPAPAPEEWLDILGNGLLRKKTLVPGPTGSSRPLKGQVVTVHLQMSLENGTRVQEEPELAFTLGDCDVIQALDLSVPLMHVGETAMVTADSKYCYGPQGSRSPYIPPHAALCLEVTLKTAEDGPDLEMLSGQERVALANRKRECGNAHYQRADFVLAANSYDLAIKAITSNAKVDMTCEEEEELLQLKVKCLNNLAASQLKLDHYRAALRSCSQVLEHQPDNIKALFRKGKVLAQQGEYSEAIPILRAALKLEPSNKTIHAELSKLVKKRAAQRSTETALYRKMLGNPSRLPAKCPGKGAWSIPWKWLFGATAVALGGVALSVVIAARN</sequence>